<name>YIIY_SALTI</name>
<accession>P0A1U9</accession>
<accession>P43022</accession>
<protein>
    <recommendedName>
        <fullName>Uncharacterized protein YiiY</fullName>
    </recommendedName>
</protein>
<sequence>MDSVMRKSLFLLLPLVVTNAHAVYVDVRHEYLDDSKANYDRAYISHRFANGVGFAIEAISKSGGDDTNKAFNDLETQGNEYTISYQFKTGDVAWQPGFVLETGNGYSTYKPYFRATWTLNESWWVGARYRFEYVRRSSDIRDDDTINRMDVWAGYKWNNFDWTIEGIYKKADKYDLYDGGKDNYEYNFRTAYIIDQWSPFVEVGNVSVNSNSDERQTRFRVGIGYTF</sequence>
<dbReference type="EMBL" id="AL513382">
    <property type="protein sequence ID" value="CAD09573.1"/>
    <property type="molecule type" value="Genomic_DNA"/>
</dbReference>
<dbReference type="EMBL" id="AE014613">
    <property type="protein sequence ID" value="AAO71072.1"/>
    <property type="molecule type" value="Genomic_DNA"/>
</dbReference>
<dbReference type="RefSeq" id="NP_457999.1">
    <property type="nucleotide sequence ID" value="NC_003198.1"/>
</dbReference>
<dbReference type="RefSeq" id="WP_000378721.1">
    <property type="nucleotide sequence ID" value="NZ_WSUR01000010.1"/>
</dbReference>
<dbReference type="SMR" id="P0A1U9"/>
<dbReference type="KEGG" id="stt:t3568"/>
<dbReference type="KEGG" id="sty:STY3821"/>
<dbReference type="PATRIC" id="fig|220341.7.peg.3900"/>
<dbReference type="eggNOG" id="COG1452">
    <property type="taxonomic scope" value="Bacteria"/>
</dbReference>
<dbReference type="HOGENOM" id="CLU_081853_0_0_6"/>
<dbReference type="OMA" id="LTPYIEY"/>
<dbReference type="OrthoDB" id="5817226at2"/>
<dbReference type="Proteomes" id="UP000000541">
    <property type="component" value="Chromosome"/>
</dbReference>
<dbReference type="Proteomes" id="UP000002670">
    <property type="component" value="Chromosome"/>
</dbReference>
<dbReference type="GO" id="GO:0009279">
    <property type="term" value="C:cell outer membrane"/>
    <property type="evidence" value="ECO:0007669"/>
    <property type="project" value="TreeGrafter"/>
</dbReference>
<dbReference type="GO" id="GO:0015288">
    <property type="term" value="F:porin activity"/>
    <property type="evidence" value="ECO:0007669"/>
    <property type="project" value="TreeGrafter"/>
</dbReference>
<dbReference type="GO" id="GO:0015772">
    <property type="term" value="P:oligosaccharide transport"/>
    <property type="evidence" value="ECO:0007669"/>
    <property type="project" value="TreeGrafter"/>
</dbReference>
<dbReference type="Gene3D" id="2.40.160.40">
    <property type="entry name" value="monomeric porin ompg"/>
    <property type="match status" value="1"/>
</dbReference>
<dbReference type="InterPro" id="IPR053713">
    <property type="entry name" value="Bact_OM_Channel_sf"/>
</dbReference>
<dbReference type="InterPro" id="IPR009331">
    <property type="entry name" value="Oligogalacturonate-sp_porin"/>
</dbReference>
<dbReference type="PANTHER" id="PTHR38105:SF5">
    <property type="entry name" value="OUTER MEMBRANE PROTEIN"/>
    <property type="match status" value="1"/>
</dbReference>
<dbReference type="PANTHER" id="PTHR38105">
    <property type="entry name" value="OUTER MEMBRANE PROTEIN-RELATED-RELATED"/>
    <property type="match status" value="1"/>
</dbReference>
<dbReference type="Pfam" id="PF06178">
    <property type="entry name" value="KdgM"/>
    <property type="match status" value="1"/>
</dbReference>
<dbReference type="SUPFAM" id="SSF56935">
    <property type="entry name" value="Porins"/>
    <property type="match status" value="1"/>
</dbReference>
<organism>
    <name type="scientific">Salmonella typhi</name>
    <dbReference type="NCBI Taxonomy" id="90370"/>
    <lineage>
        <taxon>Bacteria</taxon>
        <taxon>Pseudomonadati</taxon>
        <taxon>Pseudomonadota</taxon>
        <taxon>Gammaproteobacteria</taxon>
        <taxon>Enterobacterales</taxon>
        <taxon>Enterobacteriaceae</taxon>
        <taxon>Salmonella</taxon>
    </lineage>
</organism>
<gene>
    <name type="primary">yiiY</name>
    <name type="ordered locus">STY3821</name>
    <name type="ordered locus">t3568</name>
</gene>
<keyword id="KW-0732">Signal</keyword>
<proteinExistence type="inferred from homology"/>
<feature type="signal peptide" evidence="1">
    <location>
        <begin position="1"/>
        <end position="22"/>
    </location>
</feature>
<feature type="chain" id="PRO_0000014231" description="Uncharacterized protein YiiY">
    <location>
        <begin position="23"/>
        <end position="227"/>
    </location>
</feature>
<evidence type="ECO:0000255" key="1"/>
<reference key="1">
    <citation type="journal article" date="2001" name="Nature">
        <title>Complete genome sequence of a multiple drug resistant Salmonella enterica serovar Typhi CT18.</title>
        <authorList>
            <person name="Parkhill J."/>
            <person name="Dougan G."/>
            <person name="James K.D."/>
            <person name="Thomson N.R."/>
            <person name="Pickard D."/>
            <person name="Wain J."/>
            <person name="Churcher C.M."/>
            <person name="Mungall K.L."/>
            <person name="Bentley S.D."/>
            <person name="Holden M.T.G."/>
            <person name="Sebaihia M."/>
            <person name="Baker S."/>
            <person name="Basham D."/>
            <person name="Brooks K."/>
            <person name="Chillingworth T."/>
            <person name="Connerton P."/>
            <person name="Cronin A."/>
            <person name="Davis P."/>
            <person name="Davies R.M."/>
            <person name="Dowd L."/>
            <person name="White N."/>
            <person name="Farrar J."/>
            <person name="Feltwell T."/>
            <person name="Hamlin N."/>
            <person name="Haque A."/>
            <person name="Hien T.T."/>
            <person name="Holroyd S."/>
            <person name="Jagels K."/>
            <person name="Krogh A."/>
            <person name="Larsen T.S."/>
            <person name="Leather S."/>
            <person name="Moule S."/>
            <person name="O'Gaora P."/>
            <person name="Parry C."/>
            <person name="Quail M.A."/>
            <person name="Rutherford K.M."/>
            <person name="Simmonds M."/>
            <person name="Skelton J."/>
            <person name="Stevens K."/>
            <person name="Whitehead S."/>
            <person name="Barrell B.G."/>
        </authorList>
    </citation>
    <scope>NUCLEOTIDE SEQUENCE [LARGE SCALE GENOMIC DNA]</scope>
    <source>
        <strain>CT18</strain>
    </source>
</reference>
<reference key="2">
    <citation type="journal article" date="2003" name="J. Bacteriol.">
        <title>Comparative genomics of Salmonella enterica serovar Typhi strains Ty2 and CT18.</title>
        <authorList>
            <person name="Deng W."/>
            <person name="Liou S.-R."/>
            <person name="Plunkett G. III"/>
            <person name="Mayhew G.F."/>
            <person name="Rose D.J."/>
            <person name="Burland V."/>
            <person name="Kodoyianni V."/>
            <person name="Schwartz D.C."/>
            <person name="Blattner F.R."/>
        </authorList>
    </citation>
    <scope>NUCLEOTIDE SEQUENCE [LARGE SCALE GENOMIC DNA]</scope>
    <source>
        <strain>ATCC 700931 / Ty2</strain>
    </source>
</reference>